<organism>
    <name type="scientific">Dictyostelium discoideum</name>
    <name type="common">Social amoeba</name>
    <dbReference type="NCBI Taxonomy" id="44689"/>
    <lineage>
        <taxon>Eukaryota</taxon>
        <taxon>Amoebozoa</taxon>
        <taxon>Evosea</taxon>
        <taxon>Eumycetozoa</taxon>
        <taxon>Dictyostelia</taxon>
        <taxon>Dictyosteliales</taxon>
        <taxon>Dictyosteliaceae</taxon>
        <taxon>Dictyostelium</taxon>
    </lineage>
</organism>
<feature type="chain" id="PRO_0000391331" description="FERM domain-containing protein A">
    <location>
        <begin position="1"/>
        <end position="1154"/>
    </location>
</feature>
<feature type="domain" description="FERM 1" evidence="1">
    <location>
        <begin position="218"/>
        <end position="547"/>
    </location>
</feature>
<feature type="domain" description="FERM 2" evidence="1">
    <location>
        <begin position="666"/>
        <end position="1103"/>
    </location>
</feature>
<feature type="region of interest" description="Disordered" evidence="2">
    <location>
        <begin position="122"/>
        <end position="149"/>
    </location>
</feature>
<feature type="region of interest" description="Disordered" evidence="2">
    <location>
        <begin position="432"/>
        <end position="468"/>
    </location>
</feature>
<feature type="region of interest" description="Disordered" evidence="2">
    <location>
        <begin position="715"/>
        <end position="734"/>
    </location>
</feature>
<feature type="region of interest" description="Disordered" evidence="2">
    <location>
        <begin position="771"/>
        <end position="794"/>
    </location>
</feature>
<feature type="region of interest" description="Disordered" evidence="2">
    <location>
        <begin position="961"/>
        <end position="980"/>
    </location>
</feature>
<feature type="compositionally biased region" description="Gly residues" evidence="2">
    <location>
        <begin position="437"/>
        <end position="447"/>
    </location>
</feature>
<feature type="compositionally biased region" description="Low complexity" evidence="2">
    <location>
        <begin position="448"/>
        <end position="463"/>
    </location>
</feature>
<accession>Q54EW0</accession>
<keyword id="KW-1185">Reference proteome</keyword>
<keyword id="KW-0677">Repeat</keyword>
<name>FRMA_DICDI</name>
<protein>
    <recommendedName>
        <fullName>FERM domain-containing protein A</fullName>
    </recommendedName>
</protein>
<proteinExistence type="evidence at transcript level"/>
<sequence>MAVLSLVELCFISIMERMEYNNQALQKIPPQLIERLINFMVYKLPPNHLSLQTISKPIRIKLVRQNRVITMRFSIYNTIDKIIHQIYERIINEEKMEQNEKQKNSSNNNLLSLLTLNNNNQNNNSSIITTTTTTTNNNNNSNCGSSSSSSSSKQILWGSIENYGLFQQSGSFRNARWLQLDKTLAYYEIDSNETLEFKTCKSVLKIRFFGPWERVVHPLHQSTMLDETIKTFVFDESKTVSEISMELAKKLQLKYPEELSLKVQCEEEDDGRGIWLSADLTLPEQGIDPLYTIFLLKRQFFFCKDIIIDFSMDAEMLHFVFCQCLDAIIDTSHPCSPTESILFAALQCQICFGDYVHGSKEIDQIRQRDFLPMEFINQKNILKEILIQYQRLIGMSEQKAKLNYIQLAKSLKTYGYTFFKVTNRQTSIVNNNLSSSGGSGNGSGSGNGSSSSSSNSSSGNNNNHNHHNHQQLFGISSEAVLTLDPMTNNTISLYSLSNIRKWHVLNNVFTIEYNDRKDTFISMEAEAISHVLSSYIHHNLRETPSIQKQWDQNYLSVSGRNSLTNGRKRLSTCSNCSSDSMEFDSSKSNTKDKDWKYQYGLVIKKCALYIEPKKLYINPLSTQITGSMVNKELNKDTKVTKVLKVLTDLSSKMILSFSKSSPAKEREIVVKFSDKKVKSFVVDEQKTVSEITQEIGLKLGIKNPEEFSLQLIVNNKNNNNNNNSNNSSTSSSSSSSVNNSGIFDGLNNSNVNNVFYNSYIVNSSISNNSNSNSNSNILNNSNDEQSTSTSTSSSLGGIWLKPYQPLSEQSISPDSKLLFKKKFYTSDIGAADDCNSDPVYFNLLFFQSKDAIISNTYTCSKEEAIQLAATLFQINFGDHNPNIHKPGFLKSQDLKFFLPPNSLELWGLSFQKIEKSIYKEHQNLRGIKEVYAKYRYVQLCRSLKTFGAIFFSVRQLLPNKTNGSSSSSSNNNGGNSNNGINGNGIITGGNGGSGGGGSGIGGNGSGINTGGNGFGGSQQIPINQPLVLGFSRKCILFMTAKTKKFLVEYPLTHLRRWAYHKDTQCLTLDFGDYEMGRIVLQTTESEEISSYLSDYIDYIQTKLVGSQSFSRSIFNSDNNSSSFFSNSFCNNTTTTTTTTTTTTTTTTTTTTNNV</sequence>
<comment type="function">
    <text evidence="3 4">Key regulator of adhesion dynamics, it acts as an anti-adhesive. Plays a critical role in the regulation of cell-cell adhesion, multi-cellular development and, in particular, the formation of the organising center known as the tip. Required for turnover of paxillin-adhesion sites during cell migration. Plays a major role in normal cell shape, cell-substrate adhesion and actin cytoskeleton organization.</text>
</comment>
<comment type="developmental stage">
    <text>It is present during all stages of starvation-induced multicellular development. It is 5.7-, 6.5- and 10.9-fold higher at 8, 16 and 24 h, respectively after starvation.</text>
</comment>
<comment type="induction">
    <text evidence="4">By starvation.</text>
</comment>
<comment type="disruption phenotype">
    <text evidence="3 4">Loss of FrmA leads to increased cell-cell adhesion and results in impaired multi-cellular development, slug migration and fruiting bodies. Mutants show increased adhesion because of an increased number, persistence and mislocalization of paxillin rich cell-substrate adhesions, which is associated with decreased motility. FrmA null cells are unable to efficiently sort to the apex of mounds and form the organising center known as the tip. They also show a delayed expression of LagC.</text>
</comment>
<gene>
    <name type="primary">frmA</name>
    <name type="ORF">DDB_G0291303</name>
</gene>
<reference key="1">
    <citation type="journal article" date="2005" name="Nature">
        <title>The genome of the social amoeba Dictyostelium discoideum.</title>
        <authorList>
            <person name="Eichinger L."/>
            <person name="Pachebat J.A."/>
            <person name="Gloeckner G."/>
            <person name="Rajandream M.A."/>
            <person name="Sucgang R."/>
            <person name="Berriman M."/>
            <person name="Song J."/>
            <person name="Olsen R."/>
            <person name="Szafranski K."/>
            <person name="Xu Q."/>
            <person name="Tunggal B."/>
            <person name="Kummerfeld S."/>
            <person name="Madera M."/>
            <person name="Konfortov B.A."/>
            <person name="Rivero F."/>
            <person name="Bankier A.T."/>
            <person name="Lehmann R."/>
            <person name="Hamlin N."/>
            <person name="Davies R."/>
            <person name="Gaudet P."/>
            <person name="Fey P."/>
            <person name="Pilcher K."/>
            <person name="Chen G."/>
            <person name="Saunders D."/>
            <person name="Sodergren E.J."/>
            <person name="Davis P."/>
            <person name="Kerhornou A."/>
            <person name="Nie X."/>
            <person name="Hall N."/>
            <person name="Anjard C."/>
            <person name="Hemphill L."/>
            <person name="Bason N."/>
            <person name="Farbrother P."/>
            <person name="Desany B."/>
            <person name="Just E."/>
            <person name="Morio T."/>
            <person name="Rost R."/>
            <person name="Churcher C.M."/>
            <person name="Cooper J."/>
            <person name="Haydock S."/>
            <person name="van Driessche N."/>
            <person name="Cronin A."/>
            <person name="Goodhead I."/>
            <person name="Muzny D.M."/>
            <person name="Mourier T."/>
            <person name="Pain A."/>
            <person name="Lu M."/>
            <person name="Harper D."/>
            <person name="Lindsay R."/>
            <person name="Hauser H."/>
            <person name="James K.D."/>
            <person name="Quiles M."/>
            <person name="Madan Babu M."/>
            <person name="Saito T."/>
            <person name="Buchrieser C."/>
            <person name="Wardroper A."/>
            <person name="Felder M."/>
            <person name="Thangavelu M."/>
            <person name="Johnson D."/>
            <person name="Knights A."/>
            <person name="Loulseged H."/>
            <person name="Mungall K.L."/>
            <person name="Oliver K."/>
            <person name="Price C."/>
            <person name="Quail M.A."/>
            <person name="Urushihara H."/>
            <person name="Hernandez J."/>
            <person name="Rabbinowitsch E."/>
            <person name="Steffen D."/>
            <person name="Sanders M."/>
            <person name="Ma J."/>
            <person name="Kohara Y."/>
            <person name="Sharp S."/>
            <person name="Simmonds M.N."/>
            <person name="Spiegler S."/>
            <person name="Tivey A."/>
            <person name="Sugano S."/>
            <person name="White B."/>
            <person name="Walker D."/>
            <person name="Woodward J.R."/>
            <person name="Winckler T."/>
            <person name="Tanaka Y."/>
            <person name="Shaulsky G."/>
            <person name="Schleicher M."/>
            <person name="Weinstock G.M."/>
            <person name="Rosenthal A."/>
            <person name="Cox E.C."/>
            <person name="Chisholm R.L."/>
            <person name="Gibbs R.A."/>
            <person name="Loomis W.F."/>
            <person name="Platzer M."/>
            <person name="Kay R.R."/>
            <person name="Williams J.G."/>
            <person name="Dear P.H."/>
            <person name="Noegel A.A."/>
            <person name="Barrell B.G."/>
            <person name="Kuspa A."/>
        </authorList>
    </citation>
    <scope>NUCLEOTIDE SEQUENCE [LARGE SCALE GENOMIC DNA]</scope>
    <source>
        <strain>AX4</strain>
    </source>
</reference>
<reference key="2">
    <citation type="journal article" date="2008" name="J. Cell Sci.">
        <title>The multi-FERM-domain-containing protein FrmA is required for turnover of paxillin-adhesion sites during cell migration of Dictyostelium.</title>
        <authorList>
            <person name="Patel H."/>
            <person name="Koenig I."/>
            <person name="Tsujioka M."/>
            <person name="Frame M.C."/>
            <person name="Anderson K.I."/>
            <person name="Brunton V.G."/>
        </authorList>
    </citation>
    <scope>FUNCTION</scope>
    <scope>DISRUPTION PHENOTYPE</scope>
    <source>
        <strain>AX2</strain>
    </source>
</reference>
<reference key="3">
    <citation type="journal article" date="2009" name="Cell. Mol. Life Sci.">
        <title>Loss of FrmA leads to increased cell-cell adhesion and impaired multi-cellular development of Dictyostelium cells.</title>
        <authorList>
            <person name="Patel H."/>
            <person name="Brunton V.G."/>
        </authorList>
    </citation>
    <scope>FUNCTION</scope>
    <scope>DISRUPTION PHENOTYPE</scope>
    <scope>INDUCTION</scope>
    <source>
        <strain>AX2</strain>
    </source>
</reference>
<dbReference type="EMBL" id="AAFI02000177">
    <property type="protein sequence ID" value="EAL61635.1"/>
    <property type="molecule type" value="Genomic_DNA"/>
</dbReference>
<dbReference type="RefSeq" id="XP_635130.1">
    <property type="nucleotide sequence ID" value="XM_630038.1"/>
</dbReference>
<dbReference type="SMR" id="Q54EW0"/>
<dbReference type="FunCoup" id="Q54EW0">
    <property type="interactions" value="20"/>
</dbReference>
<dbReference type="STRING" id="44689.Q54EW0"/>
<dbReference type="PaxDb" id="44689-DDB0233517"/>
<dbReference type="EnsemblProtists" id="EAL61635">
    <property type="protein sequence ID" value="EAL61635"/>
    <property type="gene ID" value="DDB_G0291303"/>
</dbReference>
<dbReference type="GeneID" id="8628076"/>
<dbReference type="KEGG" id="ddi:DDB_G0291303"/>
<dbReference type="dictyBase" id="DDB_G0291303">
    <property type="gene designation" value="frmA"/>
</dbReference>
<dbReference type="VEuPathDB" id="AmoebaDB:DDB_G0291303"/>
<dbReference type="eggNOG" id="KOG4261">
    <property type="taxonomic scope" value="Eukaryota"/>
</dbReference>
<dbReference type="HOGENOM" id="CLU_276155_0_0_1"/>
<dbReference type="InParanoid" id="Q54EW0"/>
<dbReference type="OMA" id="CQCLDAI"/>
<dbReference type="PRO" id="PR:Q54EW0"/>
<dbReference type="Proteomes" id="UP000002195">
    <property type="component" value="Chromosome 6"/>
</dbReference>
<dbReference type="GO" id="GO:0015629">
    <property type="term" value="C:actin cytoskeleton"/>
    <property type="evidence" value="ECO:0000314"/>
    <property type="project" value="dictyBase"/>
</dbReference>
<dbReference type="GO" id="GO:0005737">
    <property type="term" value="C:cytoplasm"/>
    <property type="evidence" value="ECO:0000318"/>
    <property type="project" value="GO_Central"/>
</dbReference>
<dbReference type="GO" id="GO:0005886">
    <property type="term" value="C:plasma membrane"/>
    <property type="evidence" value="ECO:0000318"/>
    <property type="project" value="GO_Central"/>
</dbReference>
<dbReference type="GO" id="GO:0030036">
    <property type="term" value="P:actin cytoskeleton organization"/>
    <property type="evidence" value="ECO:0000315"/>
    <property type="project" value="dictyBase"/>
</dbReference>
<dbReference type="GO" id="GO:0048870">
    <property type="term" value="P:cell motility"/>
    <property type="evidence" value="ECO:0000315"/>
    <property type="project" value="dictyBase"/>
</dbReference>
<dbReference type="GO" id="GO:0098609">
    <property type="term" value="P:cell-cell adhesion"/>
    <property type="evidence" value="ECO:0000318"/>
    <property type="project" value="GO_Central"/>
</dbReference>
<dbReference type="GO" id="GO:0022408">
    <property type="term" value="P:negative regulation of cell-cell adhesion"/>
    <property type="evidence" value="ECO:0000315"/>
    <property type="project" value="dictyBase"/>
</dbReference>
<dbReference type="GO" id="GO:0010812">
    <property type="term" value="P:negative regulation of cell-substrate adhesion"/>
    <property type="evidence" value="ECO:0000315"/>
    <property type="project" value="dictyBase"/>
</dbReference>
<dbReference type="GO" id="GO:0046956">
    <property type="term" value="P:positive phototaxis"/>
    <property type="evidence" value="ECO:0000315"/>
    <property type="project" value="dictyBase"/>
</dbReference>
<dbReference type="GO" id="GO:0046686">
    <property type="term" value="P:response to cadmium ion"/>
    <property type="evidence" value="ECO:0007007"/>
    <property type="project" value="dictyBase"/>
</dbReference>
<dbReference type="GO" id="GO:0031288">
    <property type="term" value="P:sorocarp morphogenesis"/>
    <property type="evidence" value="ECO:0000315"/>
    <property type="project" value="dictyBase"/>
</dbReference>
<dbReference type="CDD" id="cd14473">
    <property type="entry name" value="FERM_B-lobe"/>
    <property type="match status" value="2"/>
</dbReference>
<dbReference type="CDD" id="cd17090">
    <property type="entry name" value="FERM_F1_TLN"/>
    <property type="match status" value="1"/>
</dbReference>
<dbReference type="FunFam" id="1.20.80.10:FF:000007">
    <property type="entry name" value="Talin 2"/>
    <property type="match status" value="1"/>
</dbReference>
<dbReference type="Gene3D" id="1.20.80.10">
    <property type="match status" value="2"/>
</dbReference>
<dbReference type="Gene3D" id="3.10.20.90">
    <property type="entry name" value="Phosphatidylinositol 3-kinase Catalytic Subunit, Chain A, domain 1"/>
    <property type="match status" value="3"/>
</dbReference>
<dbReference type="Gene3D" id="2.30.29.30">
    <property type="entry name" value="Pleckstrin-homology domain (PH domain)/Phosphotyrosine-binding domain (PTB)"/>
    <property type="match status" value="2"/>
</dbReference>
<dbReference type="InterPro" id="IPR019749">
    <property type="entry name" value="Band_41_domain"/>
</dbReference>
<dbReference type="InterPro" id="IPR014352">
    <property type="entry name" value="FERM/acyl-CoA-bd_prot_sf"/>
</dbReference>
<dbReference type="InterPro" id="IPR035963">
    <property type="entry name" value="FERM_2"/>
</dbReference>
<dbReference type="InterPro" id="IPR019748">
    <property type="entry name" value="FERM_central"/>
</dbReference>
<dbReference type="InterPro" id="IPR019747">
    <property type="entry name" value="FERM_CS"/>
</dbReference>
<dbReference type="InterPro" id="IPR000299">
    <property type="entry name" value="FERM_domain"/>
</dbReference>
<dbReference type="InterPro" id="IPR032425">
    <property type="entry name" value="FERM_f0"/>
</dbReference>
<dbReference type="InterPro" id="IPR002404">
    <property type="entry name" value="IRS_PTB"/>
</dbReference>
<dbReference type="InterPro" id="IPR011993">
    <property type="entry name" value="PH-like_dom_sf"/>
</dbReference>
<dbReference type="InterPro" id="IPR029071">
    <property type="entry name" value="Ubiquitin-like_domsf"/>
</dbReference>
<dbReference type="PANTHER" id="PTHR19981:SF1">
    <property type="entry name" value="RHEA, ISOFORM B"/>
    <property type="match status" value="1"/>
</dbReference>
<dbReference type="PANTHER" id="PTHR19981">
    <property type="entry name" value="TALIN"/>
    <property type="match status" value="1"/>
</dbReference>
<dbReference type="Pfam" id="PF16511">
    <property type="entry name" value="FERM_f0"/>
    <property type="match status" value="1"/>
</dbReference>
<dbReference type="Pfam" id="PF00373">
    <property type="entry name" value="FERM_M"/>
    <property type="match status" value="2"/>
</dbReference>
<dbReference type="Pfam" id="PF02174">
    <property type="entry name" value="IRS"/>
    <property type="match status" value="2"/>
</dbReference>
<dbReference type="SMART" id="SM00295">
    <property type="entry name" value="B41"/>
    <property type="match status" value="2"/>
</dbReference>
<dbReference type="SMART" id="SM01244">
    <property type="entry name" value="IRS"/>
    <property type="match status" value="1"/>
</dbReference>
<dbReference type="SUPFAM" id="SSF50729">
    <property type="entry name" value="PH domain-like"/>
    <property type="match status" value="2"/>
</dbReference>
<dbReference type="SUPFAM" id="SSF47031">
    <property type="entry name" value="Second domain of FERM"/>
    <property type="match status" value="2"/>
</dbReference>
<dbReference type="SUPFAM" id="SSF54236">
    <property type="entry name" value="Ubiquitin-like"/>
    <property type="match status" value="1"/>
</dbReference>
<dbReference type="PROSITE" id="PS00660">
    <property type="entry name" value="FERM_1"/>
    <property type="match status" value="1"/>
</dbReference>
<dbReference type="PROSITE" id="PS50057">
    <property type="entry name" value="FERM_3"/>
    <property type="match status" value="2"/>
</dbReference>
<evidence type="ECO:0000255" key="1">
    <source>
        <dbReference type="PROSITE-ProRule" id="PRU00084"/>
    </source>
</evidence>
<evidence type="ECO:0000256" key="2">
    <source>
        <dbReference type="SAM" id="MobiDB-lite"/>
    </source>
</evidence>
<evidence type="ECO:0000269" key="3">
    <source>
    </source>
</evidence>
<evidence type="ECO:0000269" key="4">
    <source>
    </source>
</evidence>